<evidence type="ECO:0000250" key="1"/>
<evidence type="ECO:0000255" key="2">
    <source>
        <dbReference type="PROSITE-ProRule" id="PRU00191"/>
    </source>
</evidence>
<evidence type="ECO:0000256" key="3">
    <source>
        <dbReference type="SAM" id="MobiDB-lite"/>
    </source>
</evidence>
<evidence type="ECO:0000269" key="4">
    <source>
    </source>
</evidence>
<evidence type="ECO:0000269" key="5">
    <source>
    </source>
</evidence>
<evidence type="ECO:0000269" key="6">
    <source>
    </source>
</evidence>
<evidence type="ECO:0000303" key="7">
    <source>
    </source>
</evidence>
<evidence type="ECO:0000305" key="8"/>
<evidence type="ECO:0007829" key="9">
    <source>
        <dbReference type="PDB" id="2CS0"/>
    </source>
</evidence>
<reference key="1">
    <citation type="journal article" date="2001" name="Biochem. Biophys. Res. Commun.">
        <title>HSH2: a novel SH2 domain-containing adapter protein involved in tyrosine kinase signaling in hematopoietic cells.</title>
        <authorList>
            <person name="Oda T."/>
            <person name="Muramatsu M.-A."/>
            <person name="Isogai T."/>
            <person name="Masuho Y."/>
            <person name="Asano S."/>
            <person name="Yamashita T."/>
        </authorList>
    </citation>
    <scope>NUCLEOTIDE SEQUENCE [MRNA] (ISOFORM 1)</scope>
    <scope>TISSUE SPECIFICITY</scope>
    <scope>INTERACTION WITH FES AND TNK2</scope>
    <scope>SUBCELLULAR LOCATION</scope>
    <scope>PHOSPHORYLATION</scope>
    <scope>FUNCTION</scope>
</reference>
<reference key="2">
    <citation type="journal article" date="2003" name="J. Biol. Chem.">
        <title>Cloning and characterization of ALX, an adaptor downstream of CD28.</title>
        <authorList>
            <person name="Greene T.A."/>
            <person name="Powell P."/>
            <person name="Nzerem C."/>
            <person name="Shapiro M.J."/>
            <person name="Shapiro V.S."/>
        </authorList>
    </citation>
    <scope>NUCLEOTIDE SEQUENCE [MRNA] (ISOFORM 1)</scope>
    <scope>TISSUE SPECIFICITY</scope>
    <scope>SUBCELLULAR LOCATION</scope>
    <scope>FUNCTION</scope>
    <source>
        <tissue>Spleen</tissue>
    </source>
</reference>
<reference key="3">
    <citation type="journal article" date="2004" name="Nat. Genet.">
        <title>Complete sequencing and characterization of 21,243 full-length human cDNAs.</title>
        <authorList>
            <person name="Ota T."/>
            <person name="Suzuki Y."/>
            <person name="Nishikawa T."/>
            <person name="Otsuki T."/>
            <person name="Sugiyama T."/>
            <person name="Irie R."/>
            <person name="Wakamatsu A."/>
            <person name="Hayashi K."/>
            <person name="Sato H."/>
            <person name="Nagai K."/>
            <person name="Kimura K."/>
            <person name="Makita H."/>
            <person name="Sekine M."/>
            <person name="Obayashi M."/>
            <person name="Nishi T."/>
            <person name="Shibahara T."/>
            <person name="Tanaka T."/>
            <person name="Ishii S."/>
            <person name="Yamamoto J."/>
            <person name="Saito K."/>
            <person name="Kawai Y."/>
            <person name="Isono Y."/>
            <person name="Nakamura Y."/>
            <person name="Nagahari K."/>
            <person name="Murakami K."/>
            <person name="Yasuda T."/>
            <person name="Iwayanagi T."/>
            <person name="Wagatsuma M."/>
            <person name="Shiratori A."/>
            <person name="Sudo H."/>
            <person name="Hosoiri T."/>
            <person name="Kaku Y."/>
            <person name="Kodaira H."/>
            <person name="Kondo H."/>
            <person name="Sugawara M."/>
            <person name="Takahashi M."/>
            <person name="Kanda K."/>
            <person name="Yokoi T."/>
            <person name="Furuya T."/>
            <person name="Kikkawa E."/>
            <person name="Omura Y."/>
            <person name="Abe K."/>
            <person name="Kamihara K."/>
            <person name="Katsuta N."/>
            <person name="Sato K."/>
            <person name="Tanikawa M."/>
            <person name="Yamazaki M."/>
            <person name="Ninomiya K."/>
            <person name="Ishibashi T."/>
            <person name="Yamashita H."/>
            <person name="Murakawa K."/>
            <person name="Fujimori K."/>
            <person name="Tanai H."/>
            <person name="Kimata M."/>
            <person name="Watanabe M."/>
            <person name="Hiraoka S."/>
            <person name="Chiba Y."/>
            <person name="Ishida S."/>
            <person name="Ono Y."/>
            <person name="Takiguchi S."/>
            <person name="Watanabe S."/>
            <person name="Yosida M."/>
            <person name="Hotuta T."/>
            <person name="Kusano J."/>
            <person name="Kanehori K."/>
            <person name="Takahashi-Fujii A."/>
            <person name="Hara H."/>
            <person name="Tanase T.-O."/>
            <person name="Nomura Y."/>
            <person name="Togiya S."/>
            <person name="Komai F."/>
            <person name="Hara R."/>
            <person name="Takeuchi K."/>
            <person name="Arita M."/>
            <person name="Imose N."/>
            <person name="Musashino K."/>
            <person name="Yuuki H."/>
            <person name="Oshima A."/>
            <person name="Sasaki N."/>
            <person name="Aotsuka S."/>
            <person name="Yoshikawa Y."/>
            <person name="Matsunawa H."/>
            <person name="Ichihara T."/>
            <person name="Shiohata N."/>
            <person name="Sano S."/>
            <person name="Moriya S."/>
            <person name="Momiyama H."/>
            <person name="Satoh N."/>
            <person name="Takami S."/>
            <person name="Terashima Y."/>
            <person name="Suzuki O."/>
            <person name="Nakagawa S."/>
            <person name="Senoh A."/>
            <person name="Mizoguchi H."/>
            <person name="Goto Y."/>
            <person name="Shimizu F."/>
            <person name="Wakebe H."/>
            <person name="Hishigaki H."/>
            <person name="Watanabe T."/>
            <person name="Sugiyama A."/>
            <person name="Takemoto M."/>
            <person name="Kawakami B."/>
            <person name="Yamazaki M."/>
            <person name="Watanabe K."/>
            <person name="Kumagai A."/>
            <person name="Itakura S."/>
            <person name="Fukuzumi Y."/>
            <person name="Fujimori Y."/>
            <person name="Komiyama M."/>
            <person name="Tashiro H."/>
            <person name="Tanigami A."/>
            <person name="Fujiwara T."/>
            <person name="Ono T."/>
            <person name="Yamada K."/>
            <person name="Fujii Y."/>
            <person name="Ozaki K."/>
            <person name="Hirao M."/>
            <person name="Ohmori Y."/>
            <person name="Kawabata A."/>
            <person name="Hikiji T."/>
            <person name="Kobatake N."/>
            <person name="Inagaki H."/>
            <person name="Ikema Y."/>
            <person name="Okamoto S."/>
            <person name="Okitani R."/>
            <person name="Kawakami T."/>
            <person name="Noguchi S."/>
            <person name="Itoh T."/>
            <person name="Shigeta K."/>
            <person name="Senba T."/>
            <person name="Matsumura K."/>
            <person name="Nakajima Y."/>
            <person name="Mizuno T."/>
            <person name="Morinaga M."/>
            <person name="Sasaki M."/>
            <person name="Togashi T."/>
            <person name="Oyama M."/>
            <person name="Hata H."/>
            <person name="Watanabe M."/>
            <person name="Komatsu T."/>
            <person name="Mizushima-Sugano J."/>
            <person name="Satoh T."/>
            <person name="Shirai Y."/>
            <person name="Takahashi Y."/>
            <person name="Nakagawa K."/>
            <person name="Okumura K."/>
            <person name="Nagase T."/>
            <person name="Nomura N."/>
            <person name="Kikuchi H."/>
            <person name="Masuho Y."/>
            <person name="Yamashita R."/>
            <person name="Nakai K."/>
            <person name="Yada T."/>
            <person name="Nakamura Y."/>
            <person name="Ohara O."/>
            <person name="Isogai T."/>
            <person name="Sugano S."/>
        </authorList>
    </citation>
    <scope>NUCLEOTIDE SEQUENCE [LARGE SCALE MRNA] (ISOFORMS 1 AND 2)</scope>
    <source>
        <tissue>Placenta</tissue>
        <tissue>Urinary bladder</tissue>
    </source>
</reference>
<reference key="4">
    <citation type="journal article" date="2004" name="Nature">
        <title>The DNA sequence and biology of human chromosome 19.</title>
        <authorList>
            <person name="Grimwood J."/>
            <person name="Gordon L.A."/>
            <person name="Olsen A.S."/>
            <person name="Terry A."/>
            <person name="Schmutz J."/>
            <person name="Lamerdin J.E."/>
            <person name="Hellsten U."/>
            <person name="Goodstein D."/>
            <person name="Couronne O."/>
            <person name="Tran-Gyamfi M."/>
            <person name="Aerts A."/>
            <person name="Altherr M."/>
            <person name="Ashworth L."/>
            <person name="Bajorek E."/>
            <person name="Black S."/>
            <person name="Branscomb E."/>
            <person name="Caenepeel S."/>
            <person name="Carrano A.V."/>
            <person name="Caoile C."/>
            <person name="Chan Y.M."/>
            <person name="Christensen M."/>
            <person name="Cleland C.A."/>
            <person name="Copeland A."/>
            <person name="Dalin E."/>
            <person name="Dehal P."/>
            <person name="Denys M."/>
            <person name="Detter J.C."/>
            <person name="Escobar J."/>
            <person name="Flowers D."/>
            <person name="Fotopulos D."/>
            <person name="Garcia C."/>
            <person name="Georgescu A.M."/>
            <person name="Glavina T."/>
            <person name="Gomez M."/>
            <person name="Gonzales E."/>
            <person name="Groza M."/>
            <person name="Hammon N."/>
            <person name="Hawkins T."/>
            <person name="Haydu L."/>
            <person name="Ho I."/>
            <person name="Huang W."/>
            <person name="Israni S."/>
            <person name="Jett J."/>
            <person name="Kadner K."/>
            <person name="Kimball H."/>
            <person name="Kobayashi A."/>
            <person name="Larionov V."/>
            <person name="Leem S.-H."/>
            <person name="Lopez F."/>
            <person name="Lou Y."/>
            <person name="Lowry S."/>
            <person name="Malfatti S."/>
            <person name="Martinez D."/>
            <person name="McCready P.M."/>
            <person name="Medina C."/>
            <person name="Morgan J."/>
            <person name="Nelson K."/>
            <person name="Nolan M."/>
            <person name="Ovcharenko I."/>
            <person name="Pitluck S."/>
            <person name="Pollard M."/>
            <person name="Popkie A.P."/>
            <person name="Predki P."/>
            <person name="Quan G."/>
            <person name="Ramirez L."/>
            <person name="Rash S."/>
            <person name="Retterer J."/>
            <person name="Rodriguez A."/>
            <person name="Rogers S."/>
            <person name="Salamov A."/>
            <person name="Salazar A."/>
            <person name="She X."/>
            <person name="Smith D."/>
            <person name="Slezak T."/>
            <person name="Solovyev V."/>
            <person name="Thayer N."/>
            <person name="Tice H."/>
            <person name="Tsai M."/>
            <person name="Ustaszewska A."/>
            <person name="Vo N."/>
            <person name="Wagner M."/>
            <person name="Wheeler J."/>
            <person name="Wu K."/>
            <person name="Xie G."/>
            <person name="Yang J."/>
            <person name="Dubchak I."/>
            <person name="Furey T.S."/>
            <person name="DeJong P."/>
            <person name="Dickson M."/>
            <person name="Gordon D."/>
            <person name="Eichler E.E."/>
            <person name="Pennacchio L.A."/>
            <person name="Richardson P."/>
            <person name="Stubbs L."/>
            <person name="Rokhsar D.S."/>
            <person name="Myers R.M."/>
            <person name="Rubin E.M."/>
            <person name="Lucas S.M."/>
        </authorList>
    </citation>
    <scope>NUCLEOTIDE SEQUENCE [LARGE SCALE GENOMIC DNA]</scope>
</reference>
<reference key="5">
    <citation type="submission" date="2005-07" db="EMBL/GenBank/DDBJ databases">
        <authorList>
            <person name="Mural R.J."/>
            <person name="Istrail S."/>
            <person name="Sutton G."/>
            <person name="Florea L."/>
            <person name="Halpern A.L."/>
            <person name="Mobarry C.M."/>
            <person name="Lippert R."/>
            <person name="Walenz B."/>
            <person name="Shatkay H."/>
            <person name="Dew I."/>
            <person name="Miller J.R."/>
            <person name="Flanigan M.J."/>
            <person name="Edwards N.J."/>
            <person name="Bolanos R."/>
            <person name="Fasulo D."/>
            <person name="Halldorsson B.V."/>
            <person name="Hannenhalli S."/>
            <person name="Turner R."/>
            <person name="Yooseph S."/>
            <person name="Lu F."/>
            <person name="Nusskern D.R."/>
            <person name="Shue B.C."/>
            <person name="Zheng X.H."/>
            <person name="Zhong F."/>
            <person name="Delcher A.L."/>
            <person name="Huson D.H."/>
            <person name="Kravitz S.A."/>
            <person name="Mouchard L."/>
            <person name="Reinert K."/>
            <person name="Remington K.A."/>
            <person name="Clark A.G."/>
            <person name="Waterman M.S."/>
            <person name="Eichler E.E."/>
            <person name="Adams M.D."/>
            <person name="Hunkapiller M.W."/>
            <person name="Myers E.W."/>
            <person name="Venter J.C."/>
        </authorList>
    </citation>
    <scope>NUCLEOTIDE SEQUENCE [LARGE SCALE GENOMIC DNA]</scope>
</reference>
<reference key="6">
    <citation type="journal article" date="2004" name="Genome Res.">
        <title>The status, quality, and expansion of the NIH full-length cDNA project: the Mammalian Gene Collection (MGC).</title>
        <authorList>
            <consortium name="The MGC Project Team"/>
        </authorList>
    </citation>
    <scope>NUCLEOTIDE SEQUENCE [LARGE SCALE MRNA] (ISOFORM 1)</scope>
    <source>
        <tissue>B-cell</tissue>
    </source>
</reference>
<reference key="7">
    <citation type="journal article" date="2004" name="J. Biol. Chem.">
        <title>The ALX Src homology 2 domain is both necessary and sufficient to inhibit T cell receptor/CD28-mediated up-regulation of RE/AP.</title>
        <authorList>
            <person name="Shapiro M.J."/>
            <person name="Powell P."/>
            <person name="Ndubuizu A."/>
            <person name="Nzerem C."/>
            <person name="Shapiro V.S."/>
        </authorList>
    </citation>
    <scope>MUTAGENESIS OF 10-PRO--PRO-13; PRO-116; TYR-135; 192-PRO--PRO-195; TYR-341 AND 346-PRO--PRO-349</scope>
    <scope>FUNCTION</scope>
    <scope>PHOSPHORYLATION</scope>
    <scope>SUBCELLULAR LOCATION</scope>
</reference>
<reference key="8">
    <citation type="journal article" date="2005" name="J. Biol. Chem.">
        <title>The carboxyl-terminal segment of the adaptor protein ALX directs its nuclear export during T cell activation.</title>
        <authorList>
            <person name="Shapiro M.J."/>
            <person name="Chen Y.-Y."/>
            <person name="Shapiro V.S."/>
        </authorList>
    </citation>
    <scope>SUBCELLULAR LOCATION</scope>
</reference>
<reference key="9">
    <citation type="submission" date="2005-11" db="PDB data bank">
        <title>Solution structure of the SH2 domain of human HSH2D protein.</title>
        <authorList>
            <consortium name="RIKEN structural genomics initiative (RSGI)"/>
        </authorList>
    </citation>
    <scope>STRUCTURE BY NMR OF 24-129</scope>
</reference>
<name>HSH2D_HUMAN</name>
<accession>Q96JZ2</accession>
<accession>B5ME72</accession>
<accession>Q6ZNG7</accession>
<feature type="chain" id="PRO_0000233129" description="Hematopoietic SH2 domain-containing protein">
    <location>
        <begin position="1"/>
        <end position="352"/>
    </location>
</feature>
<feature type="domain" description="SH2" evidence="2">
    <location>
        <begin position="34"/>
        <end position="125"/>
    </location>
</feature>
<feature type="region of interest" description="Disordered" evidence="3">
    <location>
        <begin position="157"/>
        <end position="199"/>
    </location>
</feature>
<feature type="region of interest" description="Disordered" evidence="3">
    <location>
        <begin position="241"/>
        <end position="352"/>
    </location>
</feature>
<feature type="compositionally biased region" description="Polar residues" evidence="3">
    <location>
        <begin position="180"/>
        <end position="191"/>
    </location>
</feature>
<feature type="compositionally biased region" description="Basic and acidic residues" evidence="3">
    <location>
        <begin position="283"/>
        <end position="295"/>
    </location>
</feature>
<feature type="compositionally biased region" description="Pro residues" evidence="3">
    <location>
        <begin position="343"/>
        <end position="352"/>
    </location>
</feature>
<feature type="splice variant" id="VSP_018052" description="In isoform 2." evidence="7">
    <original>MTEAGKLPLPLPPRLDWFVHTQMGQLAQDGVPEWFHGAISREDAENLLESQPLGSFLIRVSHSHVGYTLSYK</original>
    <variation>MRGSRMSQPPQCLRR</variation>
    <location>
        <begin position="1"/>
        <end position="72"/>
    </location>
</feature>
<feature type="mutagenesis site" description="No change in the ability to inhibit RE/AP up-regulation in response to TCR/CD28 stimulation." evidence="6">
    <original>PLPP</original>
    <variation>ALPA</variation>
    <location>
        <begin position="10"/>
        <end position="13"/>
    </location>
</feature>
<feature type="mutagenesis site" description="Loss of the ability to inhibit RE/AP up-regulation in response to TCR/CD28 stimulation.">
    <original>R</original>
    <variation>K</variation>
    <location>
        <position position="59"/>
    </location>
</feature>
<feature type="mutagenesis site" description="No change in the ability to inhibit RE/AP up-regulation in response to TCR/CD28 stimulation." evidence="6">
    <original>P</original>
    <variation>A</variation>
    <location>
        <position position="116"/>
    </location>
</feature>
<feature type="mutagenesis site" description="No change in the ability to inhibit RE/AP up-regulation in response to TCR/CD28 stimulation." evidence="6">
    <original>Y</original>
    <variation>F</variation>
    <location>
        <position position="135"/>
    </location>
</feature>
<feature type="mutagenesis site" description="No change in the ability to inhibit RE/AP up-regulation in response to TCR/CD28 stimulation." evidence="6">
    <original>PKSP</original>
    <variation>AKSA</variation>
    <location>
        <begin position="192"/>
        <end position="195"/>
    </location>
</feature>
<feature type="mutagenesis site" description="No change in the ability to inhibit RE/AP up-regulation in response to TCR/CD28 stimulation." evidence="6">
    <original>Y</original>
    <variation>F</variation>
    <location>
        <position position="341"/>
    </location>
</feature>
<feature type="mutagenesis site" description="No change in the ability to inhibit RE/AP up-regulation in response to TCR/CD28 stimulation." evidence="6">
    <original>PFAP</original>
    <variation>AFAA</variation>
    <location>
        <begin position="346"/>
        <end position="349"/>
    </location>
</feature>
<feature type="sequence conflict" description="In Ref. 3; BAD18408." evidence="8" ref="3">
    <original>R</original>
    <variation>G</variation>
    <location>
        <position position="180"/>
    </location>
</feature>
<feature type="strand" evidence="9">
    <location>
        <begin position="28"/>
        <end position="30"/>
    </location>
</feature>
<feature type="strand" evidence="9">
    <location>
        <begin position="33"/>
        <end position="35"/>
    </location>
</feature>
<feature type="helix" evidence="9">
    <location>
        <begin position="41"/>
        <end position="49"/>
    </location>
</feature>
<feature type="strand" evidence="9">
    <location>
        <begin position="56"/>
        <end position="60"/>
    </location>
</feature>
<feature type="strand" evidence="9">
    <location>
        <begin position="62"/>
        <end position="71"/>
    </location>
</feature>
<feature type="strand" evidence="9">
    <location>
        <begin position="74"/>
        <end position="76"/>
    </location>
</feature>
<feature type="strand" evidence="9">
    <location>
        <begin position="78"/>
        <end position="84"/>
    </location>
</feature>
<feature type="strand" evidence="9">
    <location>
        <begin position="99"/>
        <end position="101"/>
    </location>
</feature>
<feature type="helix" evidence="9">
    <location>
        <begin position="102"/>
        <end position="109"/>
    </location>
</feature>
<proteinExistence type="evidence at protein level"/>
<comment type="function">
    <text evidence="1 4 5 6">May be a modulator of the apoptotic response through its ability to affect mitochondrial stability (By similarity). Adapter protein involved in tyrosine kinase and CD28 signaling. Seems to affect CD28-mediated activation of the RE/AP element of the interleukin-2 promoter.</text>
</comment>
<comment type="subunit">
    <text evidence="4">Interacts with FES and TNK2.</text>
</comment>
<comment type="interaction">
    <interactant intactId="EBI-3919324">
        <id>Q96JZ2</id>
    </interactant>
    <interactant intactId="EBI-1379503">
        <id>P10721</id>
        <label>KIT</label>
    </interactant>
    <organismsDiffer>false</organismsDiffer>
    <experiments>5</experiments>
</comment>
<comment type="interaction">
    <interactant intactId="EBI-3919324">
        <id>Q96JZ2</id>
    </interactant>
    <interactant intactId="EBI-346882">
        <id>Q99816</id>
        <label>TSG101</label>
    </interactant>
    <organismsDiffer>false</organismsDiffer>
    <experiments>3</experiments>
</comment>
<comment type="subcellular location">
    <subcellularLocation>
        <location>Cytoplasm</location>
    </subcellularLocation>
    <subcellularLocation>
        <location>Nucleus</location>
    </subcellularLocation>
</comment>
<comment type="alternative products">
    <event type="alternative splicing"/>
    <isoform>
        <id>Q96JZ2-1</id>
        <name>1</name>
        <sequence type="displayed"/>
    </isoform>
    <isoform>
        <id>Q96JZ2-2</id>
        <name>2</name>
        <sequence type="described" ref="VSP_018052"/>
    </isoform>
</comment>
<comment type="tissue specificity">
    <text evidence="4 5">Predominantly expressed in spleen and hematopoietic cells such as peripheral blood leukocytes and weakly expressed in prostate, thymus, heart, small intestine and placenta.</text>
</comment>
<comment type="PTM">
    <text evidence="4 6">May be phosphorylated by FES and ACK1.</text>
</comment>
<dbReference type="EMBL" id="AY319652">
    <property type="protein sequence ID" value="AAQ81285.1"/>
    <property type="molecule type" value="mRNA"/>
</dbReference>
<dbReference type="EMBL" id="AK027792">
    <property type="protein sequence ID" value="BAB55372.1"/>
    <property type="molecule type" value="mRNA"/>
</dbReference>
<dbReference type="EMBL" id="AK131222">
    <property type="protein sequence ID" value="BAD18408.1"/>
    <property type="molecule type" value="mRNA"/>
</dbReference>
<dbReference type="EMBL" id="AC008894">
    <property type="status" value="NOT_ANNOTATED_CDS"/>
    <property type="molecule type" value="Genomic_DNA"/>
</dbReference>
<dbReference type="EMBL" id="AC020911">
    <property type="status" value="NOT_ANNOTATED_CDS"/>
    <property type="molecule type" value="Genomic_DNA"/>
</dbReference>
<dbReference type="EMBL" id="CH471106">
    <property type="protein sequence ID" value="EAW84529.1"/>
    <property type="molecule type" value="Genomic_DNA"/>
</dbReference>
<dbReference type="EMBL" id="BC025237">
    <property type="protein sequence ID" value="AAH25237.1"/>
    <property type="molecule type" value="mRNA"/>
</dbReference>
<dbReference type="CCDS" id="CCDS74304.1">
    <molecule id="Q96JZ2-1"/>
</dbReference>
<dbReference type="PIR" id="JC7781">
    <property type="entry name" value="JC7781"/>
</dbReference>
<dbReference type="RefSeq" id="NP_001278203.1">
    <property type="nucleotide sequence ID" value="NM_001291274.1"/>
</dbReference>
<dbReference type="RefSeq" id="NP_001369346.1">
    <molecule id="Q96JZ2-1"/>
    <property type="nucleotide sequence ID" value="NM_001382417.1"/>
</dbReference>
<dbReference type="RefSeq" id="NP_116244.1">
    <molecule id="Q96JZ2-1"/>
    <property type="nucleotide sequence ID" value="NM_032855.4"/>
</dbReference>
<dbReference type="PDB" id="2CS0">
    <property type="method" value="NMR"/>
    <property type="chains" value="A=24-129"/>
</dbReference>
<dbReference type="PDBsum" id="2CS0"/>
<dbReference type="SMR" id="Q96JZ2"/>
<dbReference type="BioGRID" id="124375">
    <property type="interactions" value="24"/>
</dbReference>
<dbReference type="FunCoup" id="Q96JZ2">
    <property type="interactions" value="696"/>
</dbReference>
<dbReference type="IntAct" id="Q96JZ2">
    <property type="interactions" value="17"/>
</dbReference>
<dbReference type="STRING" id="9606.ENSP00000482604"/>
<dbReference type="GlyGen" id="Q96JZ2">
    <property type="glycosylation" value="1 site, 1 O-linked glycan (1 site)"/>
</dbReference>
<dbReference type="iPTMnet" id="Q96JZ2"/>
<dbReference type="PhosphoSitePlus" id="Q96JZ2"/>
<dbReference type="BioMuta" id="HSH2D"/>
<dbReference type="DMDM" id="74732160"/>
<dbReference type="jPOST" id="Q96JZ2"/>
<dbReference type="MassIVE" id="Q96JZ2"/>
<dbReference type="PaxDb" id="9606-ENSP00000482604"/>
<dbReference type="PeptideAtlas" id="Q96JZ2"/>
<dbReference type="ProteomicsDB" id="77021">
    <molecule id="Q96JZ2-1"/>
</dbReference>
<dbReference type="ProteomicsDB" id="77022">
    <molecule id="Q96JZ2-2"/>
</dbReference>
<dbReference type="Antibodypedia" id="27308">
    <property type="antibodies" value="160 antibodies from 24 providers"/>
</dbReference>
<dbReference type="DNASU" id="84941"/>
<dbReference type="Ensembl" id="ENST00000613986.4">
    <molecule id="Q96JZ2-1"/>
    <property type="protein sequence ID" value="ENSP00000483354.1"/>
    <property type="gene ID" value="ENSG00000196684.12"/>
</dbReference>
<dbReference type="Ensembl" id="ENST00000616645.4">
    <molecule id="Q96JZ2-1"/>
    <property type="protein sequence ID" value="ENSP00000482604.1"/>
    <property type="gene ID" value="ENSG00000196684.12"/>
</dbReference>
<dbReference type="GeneID" id="84941"/>
<dbReference type="KEGG" id="hsa:84941"/>
<dbReference type="MANE-Select" id="ENST00000613986.4">
    <property type="protein sequence ID" value="ENSP00000483354.1"/>
    <property type="RefSeq nucleotide sequence ID" value="NM_001382417.1"/>
    <property type="RefSeq protein sequence ID" value="NP_001369346.1"/>
</dbReference>
<dbReference type="UCSC" id="uc032hot.2">
    <molecule id="Q96JZ2-1"/>
    <property type="organism name" value="human"/>
</dbReference>
<dbReference type="AGR" id="HGNC:24920"/>
<dbReference type="CTD" id="84941"/>
<dbReference type="DisGeNET" id="84941"/>
<dbReference type="GeneCards" id="HSH2D"/>
<dbReference type="HGNC" id="HGNC:24920">
    <property type="gene designation" value="HSH2D"/>
</dbReference>
<dbReference type="HPA" id="ENSG00000196684">
    <property type="expression patterns" value="Tissue enhanced (bone marrow, lymphoid tissue)"/>
</dbReference>
<dbReference type="MIM" id="608349">
    <property type="type" value="gene"/>
</dbReference>
<dbReference type="neXtProt" id="NX_Q96JZ2"/>
<dbReference type="OpenTargets" id="ENSG00000196684"/>
<dbReference type="PharmGKB" id="PA134927763"/>
<dbReference type="VEuPathDB" id="HostDB:ENSG00000196684"/>
<dbReference type="eggNOG" id="ENOG502RZYN">
    <property type="taxonomic scope" value="Eukaryota"/>
</dbReference>
<dbReference type="GeneTree" id="ENSGT00940000161678"/>
<dbReference type="HOGENOM" id="CLU_067582_0_0_1"/>
<dbReference type="InParanoid" id="Q96JZ2"/>
<dbReference type="OMA" id="CGQKDPA"/>
<dbReference type="OrthoDB" id="67310at2759"/>
<dbReference type="PAN-GO" id="Q96JZ2">
    <property type="GO annotations" value="0 GO annotations based on evolutionary models"/>
</dbReference>
<dbReference type="PhylomeDB" id="Q96JZ2"/>
<dbReference type="TreeFam" id="TF336893"/>
<dbReference type="PathwayCommons" id="Q96JZ2"/>
<dbReference type="SignaLink" id="Q96JZ2"/>
<dbReference type="BioGRID-ORCS" id="84941">
    <property type="hits" value="16 hits in 363 CRISPR screens"/>
</dbReference>
<dbReference type="ChiTaRS" id="HSH2D">
    <property type="organism name" value="human"/>
</dbReference>
<dbReference type="EvolutionaryTrace" id="Q96JZ2"/>
<dbReference type="GenomeRNAi" id="84941"/>
<dbReference type="Pharos" id="Q96JZ2">
    <property type="development level" value="Tbio"/>
</dbReference>
<dbReference type="PRO" id="PR:Q96JZ2"/>
<dbReference type="Proteomes" id="UP000005640">
    <property type="component" value="Chromosome 19"/>
</dbReference>
<dbReference type="RNAct" id="Q96JZ2">
    <property type="molecule type" value="protein"/>
</dbReference>
<dbReference type="Bgee" id="ENSG00000196684">
    <property type="expression patterns" value="Expressed in granulocyte and 102 other cell types or tissues"/>
</dbReference>
<dbReference type="ExpressionAtlas" id="Q96JZ2">
    <property type="expression patterns" value="baseline and differential"/>
</dbReference>
<dbReference type="GO" id="GO:0005737">
    <property type="term" value="C:cytoplasm"/>
    <property type="evidence" value="ECO:0000318"/>
    <property type="project" value="GO_Central"/>
</dbReference>
<dbReference type="GO" id="GO:0005829">
    <property type="term" value="C:cytosol"/>
    <property type="evidence" value="ECO:0007669"/>
    <property type="project" value="Ensembl"/>
</dbReference>
<dbReference type="GO" id="GO:0005739">
    <property type="term" value="C:mitochondrion"/>
    <property type="evidence" value="ECO:0007669"/>
    <property type="project" value="Ensembl"/>
</dbReference>
<dbReference type="GO" id="GO:0005634">
    <property type="term" value="C:nucleus"/>
    <property type="evidence" value="ECO:0007669"/>
    <property type="project" value="UniProtKB-SubCell"/>
</dbReference>
<dbReference type="GO" id="GO:0030674">
    <property type="term" value="F:protein-macromolecule adaptor activity"/>
    <property type="evidence" value="ECO:0007669"/>
    <property type="project" value="Ensembl"/>
</dbReference>
<dbReference type="GO" id="GO:0002903">
    <property type="term" value="P:negative regulation of B cell apoptotic process"/>
    <property type="evidence" value="ECO:0007669"/>
    <property type="project" value="Ensembl"/>
</dbReference>
<dbReference type="GO" id="GO:0051902">
    <property type="term" value="P:negative regulation of mitochondrial depolarization"/>
    <property type="evidence" value="ECO:0007669"/>
    <property type="project" value="Ensembl"/>
</dbReference>
<dbReference type="GO" id="GO:0007165">
    <property type="term" value="P:signal transduction"/>
    <property type="evidence" value="ECO:0007669"/>
    <property type="project" value="InterPro"/>
</dbReference>
<dbReference type="GO" id="GO:0042110">
    <property type="term" value="P:T cell activation"/>
    <property type="evidence" value="ECO:0007669"/>
    <property type="project" value="Ensembl"/>
</dbReference>
<dbReference type="CDD" id="cd09946">
    <property type="entry name" value="SH2_HSH2_like"/>
    <property type="match status" value="1"/>
</dbReference>
<dbReference type="FunFam" id="3.30.505.10:FF:000059">
    <property type="entry name" value="hematopoietic SH2 domain-containing protein"/>
    <property type="match status" value="1"/>
</dbReference>
<dbReference type="Gene3D" id="3.30.505.10">
    <property type="entry name" value="SH2 domain"/>
    <property type="match status" value="1"/>
</dbReference>
<dbReference type="InterPro" id="IPR035047">
    <property type="entry name" value="HSH2D_SH2"/>
</dbReference>
<dbReference type="InterPro" id="IPR000980">
    <property type="entry name" value="SH2"/>
</dbReference>
<dbReference type="InterPro" id="IPR036860">
    <property type="entry name" value="SH2_dom_sf"/>
</dbReference>
<dbReference type="PANTHER" id="PTHR14388:SF3">
    <property type="entry name" value="HEMATOPOIETIC SH2 DOMAIN-CONTAINING PROTEIN"/>
    <property type="match status" value="1"/>
</dbReference>
<dbReference type="PANTHER" id="PTHR14388">
    <property type="entry name" value="T CELL-SPECIFIC ADAPTER PROTEIN TSAD"/>
    <property type="match status" value="1"/>
</dbReference>
<dbReference type="Pfam" id="PF00017">
    <property type="entry name" value="SH2"/>
    <property type="match status" value="1"/>
</dbReference>
<dbReference type="PRINTS" id="PR00401">
    <property type="entry name" value="SH2DOMAIN"/>
</dbReference>
<dbReference type="SMART" id="SM00252">
    <property type="entry name" value="SH2"/>
    <property type="match status" value="1"/>
</dbReference>
<dbReference type="SUPFAM" id="SSF55550">
    <property type="entry name" value="SH2 domain"/>
    <property type="match status" value="1"/>
</dbReference>
<dbReference type="PROSITE" id="PS50001">
    <property type="entry name" value="SH2"/>
    <property type="match status" value="1"/>
</dbReference>
<organism>
    <name type="scientific">Homo sapiens</name>
    <name type="common">Human</name>
    <dbReference type="NCBI Taxonomy" id="9606"/>
    <lineage>
        <taxon>Eukaryota</taxon>
        <taxon>Metazoa</taxon>
        <taxon>Chordata</taxon>
        <taxon>Craniata</taxon>
        <taxon>Vertebrata</taxon>
        <taxon>Euteleostomi</taxon>
        <taxon>Mammalia</taxon>
        <taxon>Eutheria</taxon>
        <taxon>Euarchontoglires</taxon>
        <taxon>Primates</taxon>
        <taxon>Haplorrhini</taxon>
        <taxon>Catarrhini</taxon>
        <taxon>Hominidae</taxon>
        <taxon>Homo</taxon>
    </lineage>
</organism>
<sequence length="352" mass="39002">MTEAGKLPLPLPPRLDWFVHTQMGQLAQDGVPEWFHGAISREDAENLLESQPLGSFLIRVSHSHVGYTLSYKAQSSCCHFMVKLLDDGTFMIPGEKVAHTSLDALVTFHQQKPIEPRRELLTQPCRQKDPANVDYEDLFLYSNAVAEEAACPVSAPEEASPKPVLCHQSKERKPSAEMNRITTKEATSSCPPKSPLGETRQKLWRSLKMLPERGQRVRQQLKSHLATVNLSSLLDVRRSTVISGPGTGKGSQDHSGDPTSGDRGYTDPCVATSLKSPSQPQAPKDRKVPTRKAERSVSCIEVTPGDRSWHQMVVRALSSQESKPEHQGLAEPENDQLPEEYQQPPPFAPGYC</sequence>
<protein>
    <recommendedName>
        <fullName>Hematopoietic SH2 domain-containing protein</fullName>
        <shortName>Hematopoietic SH2 protein</shortName>
    </recommendedName>
    <alternativeName>
        <fullName>Adaptor in lymphocytes of unknown function X</fullName>
    </alternativeName>
</protein>
<keyword id="KW-0002">3D-structure</keyword>
<keyword id="KW-0025">Alternative splicing</keyword>
<keyword id="KW-0963">Cytoplasm</keyword>
<keyword id="KW-0539">Nucleus</keyword>
<keyword id="KW-0597">Phosphoprotein</keyword>
<keyword id="KW-1267">Proteomics identification</keyword>
<keyword id="KW-1185">Reference proteome</keyword>
<keyword id="KW-0727">SH2 domain</keyword>
<gene>
    <name type="primary">HSH2D</name>
    <name type="synonym">ALX</name>
</gene>